<name>HBB_LORTA</name>
<accession>P02048</accession>
<dbReference type="PIR" id="B91949">
    <property type="entry name" value="HBLRN"/>
</dbReference>
<dbReference type="SMR" id="P02048"/>
<dbReference type="GO" id="GO:0072562">
    <property type="term" value="C:blood microparticle"/>
    <property type="evidence" value="ECO:0007669"/>
    <property type="project" value="TreeGrafter"/>
</dbReference>
<dbReference type="GO" id="GO:0031838">
    <property type="term" value="C:haptoglobin-hemoglobin complex"/>
    <property type="evidence" value="ECO:0007669"/>
    <property type="project" value="TreeGrafter"/>
</dbReference>
<dbReference type="GO" id="GO:0005833">
    <property type="term" value="C:hemoglobin complex"/>
    <property type="evidence" value="ECO:0007669"/>
    <property type="project" value="InterPro"/>
</dbReference>
<dbReference type="GO" id="GO:0031720">
    <property type="term" value="F:haptoglobin binding"/>
    <property type="evidence" value="ECO:0007669"/>
    <property type="project" value="TreeGrafter"/>
</dbReference>
<dbReference type="GO" id="GO:0020037">
    <property type="term" value="F:heme binding"/>
    <property type="evidence" value="ECO:0007669"/>
    <property type="project" value="InterPro"/>
</dbReference>
<dbReference type="GO" id="GO:0031721">
    <property type="term" value="F:hemoglobin alpha binding"/>
    <property type="evidence" value="ECO:0007669"/>
    <property type="project" value="TreeGrafter"/>
</dbReference>
<dbReference type="GO" id="GO:0046872">
    <property type="term" value="F:metal ion binding"/>
    <property type="evidence" value="ECO:0007669"/>
    <property type="project" value="UniProtKB-KW"/>
</dbReference>
<dbReference type="GO" id="GO:0043177">
    <property type="term" value="F:organic acid binding"/>
    <property type="evidence" value="ECO:0007669"/>
    <property type="project" value="TreeGrafter"/>
</dbReference>
<dbReference type="GO" id="GO:0019825">
    <property type="term" value="F:oxygen binding"/>
    <property type="evidence" value="ECO:0007669"/>
    <property type="project" value="InterPro"/>
</dbReference>
<dbReference type="GO" id="GO:0005344">
    <property type="term" value="F:oxygen carrier activity"/>
    <property type="evidence" value="ECO:0007669"/>
    <property type="project" value="UniProtKB-KW"/>
</dbReference>
<dbReference type="GO" id="GO:0004601">
    <property type="term" value="F:peroxidase activity"/>
    <property type="evidence" value="ECO:0007669"/>
    <property type="project" value="TreeGrafter"/>
</dbReference>
<dbReference type="GO" id="GO:0042744">
    <property type="term" value="P:hydrogen peroxide catabolic process"/>
    <property type="evidence" value="ECO:0007669"/>
    <property type="project" value="TreeGrafter"/>
</dbReference>
<dbReference type="CDD" id="cd08925">
    <property type="entry name" value="Hb-beta-like"/>
    <property type="match status" value="1"/>
</dbReference>
<dbReference type="FunFam" id="1.10.490.10:FF:000001">
    <property type="entry name" value="Hemoglobin subunit beta"/>
    <property type="match status" value="1"/>
</dbReference>
<dbReference type="Gene3D" id="1.10.490.10">
    <property type="entry name" value="Globins"/>
    <property type="match status" value="1"/>
</dbReference>
<dbReference type="InterPro" id="IPR000971">
    <property type="entry name" value="Globin"/>
</dbReference>
<dbReference type="InterPro" id="IPR009050">
    <property type="entry name" value="Globin-like_sf"/>
</dbReference>
<dbReference type="InterPro" id="IPR012292">
    <property type="entry name" value="Globin/Proto"/>
</dbReference>
<dbReference type="InterPro" id="IPR002337">
    <property type="entry name" value="Hemoglobin_b"/>
</dbReference>
<dbReference type="InterPro" id="IPR050056">
    <property type="entry name" value="Hemoglobin_oxygen_transport"/>
</dbReference>
<dbReference type="PANTHER" id="PTHR11442">
    <property type="entry name" value="HEMOGLOBIN FAMILY MEMBER"/>
    <property type="match status" value="1"/>
</dbReference>
<dbReference type="PANTHER" id="PTHR11442:SF42">
    <property type="entry name" value="HEMOGLOBIN SUBUNIT BETA"/>
    <property type="match status" value="1"/>
</dbReference>
<dbReference type="Pfam" id="PF00042">
    <property type="entry name" value="Globin"/>
    <property type="match status" value="1"/>
</dbReference>
<dbReference type="PRINTS" id="PR00814">
    <property type="entry name" value="BETAHAEM"/>
</dbReference>
<dbReference type="SUPFAM" id="SSF46458">
    <property type="entry name" value="Globin-like"/>
    <property type="match status" value="1"/>
</dbReference>
<dbReference type="PROSITE" id="PS01033">
    <property type="entry name" value="GLOBIN"/>
    <property type="match status" value="1"/>
</dbReference>
<reference key="1">
    <citation type="journal article" date="1978" name="J. Biochem.">
        <title>Amino acid sequences of the alpha and beta chains of adult hemoglobin of the slender loris, Loris tardigradus.</title>
        <authorList>
            <person name="Maita T."/>
            <person name="Goodman M."/>
            <person name="Matsuda G."/>
        </authorList>
    </citation>
    <scope>PROTEIN SEQUENCE</scope>
</reference>
<organism>
    <name type="scientific">Loris tardigradus</name>
    <name type="common">Slender loris</name>
    <dbReference type="NCBI Taxonomy" id="9468"/>
    <lineage>
        <taxon>Eukaryota</taxon>
        <taxon>Metazoa</taxon>
        <taxon>Chordata</taxon>
        <taxon>Craniata</taxon>
        <taxon>Vertebrata</taxon>
        <taxon>Euteleostomi</taxon>
        <taxon>Mammalia</taxon>
        <taxon>Eutheria</taxon>
        <taxon>Euarchontoglires</taxon>
        <taxon>Primates</taxon>
        <taxon>Strepsirrhini</taxon>
        <taxon>Lorisiformes</taxon>
        <taxon>Lorisidae</taxon>
        <taxon>Loris</taxon>
    </lineage>
</organism>
<sequence length="146" mass="15900">VHLTGEEKSAVTGLWGKVNVEDVGGEALGRLLVVYPWTQRFFESFGDLSSPSAVMGNPKVKAHGKKVLSAFSDGLNHLDNLKGTFAKLSELHCDKLHVDPENFRLLGNVLVVVLAHHFGKDFTPQVQSAYQKVVAGVANALAHKYH</sequence>
<gene>
    <name type="primary">HBB</name>
</gene>
<comment type="function">
    <text>Involved in oxygen transport from the lung to the various peripheral tissues.</text>
</comment>
<comment type="subunit">
    <text>Heterotetramer of two alpha chains and two beta chains.</text>
</comment>
<comment type="tissue specificity">
    <text>Red blood cells.</text>
</comment>
<comment type="similarity">
    <text evidence="3">Belongs to the globin family.</text>
</comment>
<keyword id="KW-0007">Acetylation</keyword>
<keyword id="KW-0903">Direct protein sequencing</keyword>
<keyword id="KW-0349">Heme</keyword>
<keyword id="KW-0408">Iron</keyword>
<keyword id="KW-0479">Metal-binding</keyword>
<keyword id="KW-0561">Oxygen transport</keyword>
<keyword id="KW-0597">Phosphoprotein</keyword>
<keyword id="KW-0702">S-nitrosylation</keyword>
<keyword id="KW-0813">Transport</keyword>
<evidence type="ECO:0000250" key="1">
    <source>
        <dbReference type="UniProtKB" id="P02086"/>
    </source>
</evidence>
<evidence type="ECO:0000250" key="2">
    <source>
        <dbReference type="UniProtKB" id="P68871"/>
    </source>
</evidence>
<evidence type="ECO:0000255" key="3">
    <source>
        <dbReference type="PROSITE-ProRule" id="PRU00238"/>
    </source>
</evidence>
<protein>
    <recommendedName>
        <fullName>Hemoglobin subunit beta</fullName>
    </recommendedName>
    <alternativeName>
        <fullName>Beta-globin</fullName>
    </alternativeName>
    <alternativeName>
        <fullName>Hemoglobin beta chain</fullName>
    </alternativeName>
</protein>
<proteinExistence type="evidence at protein level"/>
<feature type="chain" id="PRO_0000052994" description="Hemoglobin subunit beta">
    <location>
        <begin position="1"/>
        <end position="146"/>
    </location>
</feature>
<feature type="domain" description="Globin" evidence="3">
    <location>
        <begin position="2"/>
        <end position="146"/>
    </location>
</feature>
<feature type="binding site" description="distal binding residue">
    <location>
        <position position="63"/>
    </location>
    <ligand>
        <name>heme b</name>
        <dbReference type="ChEBI" id="CHEBI:60344"/>
    </ligand>
    <ligandPart>
        <name>Fe</name>
        <dbReference type="ChEBI" id="CHEBI:18248"/>
    </ligandPart>
</feature>
<feature type="binding site" description="proximal binding residue">
    <location>
        <position position="92"/>
    </location>
    <ligand>
        <name>heme b</name>
        <dbReference type="ChEBI" id="CHEBI:60344"/>
    </ligand>
    <ligandPart>
        <name>Fe</name>
        <dbReference type="ChEBI" id="CHEBI:18248"/>
    </ligandPart>
</feature>
<feature type="modified residue" description="N-acetylvaline" evidence="1">
    <location>
        <position position="1"/>
    </location>
</feature>
<feature type="modified residue" description="Phosphothreonine" evidence="2">
    <location>
        <position position="12"/>
    </location>
</feature>
<feature type="modified residue" description="Phosphoserine" evidence="2">
    <location>
        <position position="44"/>
    </location>
</feature>
<feature type="modified residue" description="N6-acetyllysine" evidence="2">
    <location>
        <position position="59"/>
    </location>
</feature>
<feature type="modified residue" description="N6-acetyllysine" evidence="2">
    <location>
        <position position="82"/>
    </location>
</feature>
<feature type="modified residue" description="S-nitrosocysteine" evidence="2">
    <location>
        <position position="93"/>
    </location>
</feature>
<feature type="modified residue" description="N6-acetyllysine" evidence="2">
    <location>
        <position position="144"/>
    </location>
</feature>